<accession>Q931Q3</accession>
<comment type="PTM">
    <text evidence="1">The N-terminus is cleaved by ribosomal processing cysteine protease Prp.</text>
</comment>
<comment type="similarity">
    <text evidence="2">Belongs to the bacterial ribosomal protein bL27 family.</text>
</comment>
<name>RL27_STAAM</name>
<sequence>MLKLNLQFFASKKGVSSTKNGRDSESKRLGAKRADGQFVTGGSILYRQRGTKIYPGENVGRGGDDTLFAKIDGVVKFERKGRDKKQVSVYAVAE</sequence>
<keyword id="KW-0687">Ribonucleoprotein</keyword>
<keyword id="KW-0689">Ribosomal protein</keyword>
<gene>
    <name evidence="2" type="primary">rpmA</name>
    <name type="ordered locus">SAV1645</name>
</gene>
<dbReference type="EMBL" id="BA000017">
    <property type="protein sequence ID" value="BAB57807.2"/>
    <property type="molecule type" value="Genomic_DNA"/>
</dbReference>
<dbReference type="RefSeq" id="WP_000916187.1">
    <property type="nucleotide sequence ID" value="NC_002758.2"/>
</dbReference>
<dbReference type="SMR" id="Q931Q3"/>
<dbReference type="GeneID" id="98346013"/>
<dbReference type="KEGG" id="sav:SAV1645"/>
<dbReference type="HOGENOM" id="CLU_095424_4_0_9"/>
<dbReference type="PhylomeDB" id="Q931Q3"/>
<dbReference type="Proteomes" id="UP000002481">
    <property type="component" value="Chromosome"/>
</dbReference>
<dbReference type="GO" id="GO:0022625">
    <property type="term" value="C:cytosolic large ribosomal subunit"/>
    <property type="evidence" value="ECO:0007669"/>
    <property type="project" value="TreeGrafter"/>
</dbReference>
<dbReference type="GO" id="GO:0003735">
    <property type="term" value="F:structural constituent of ribosome"/>
    <property type="evidence" value="ECO:0007669"/>
    <property type="project" value="InterPro"/>
</dbReference>
<dbReference type="GO" id="GO:0006412">
    <property type="term" value="P:translation"/>
    <property type="evidence" value="ECO:0007669"/>
    <property type="project" value="UniProtKB-UniRule"/>
</dbReference>
<dbReference type="FunFam" id="2.40.50.100:FF:000004">
    <property type="entry name" value="50S ribosomal protein L27"/>
    <property type="match status" value="1"/>
</dbReference>
<dbReference type="Gene3D" id="2.40.50.100">
    <property type="match status" value="1"/>
</dbReference>
<dbReference type="HAMAP" id="MF_00539">
    <property type="entry name" value="Ribosomal_bL27"/>
    <property type="match status" value="1"/>
</dbReference>
<dbReference type="InterPro" id="IPR001684">
    <property type="entry name" value="Ribosomal_bL27"/>
</dbReference>
<dbReference type="InterPro" id="IPR018261">
    <property type="entry name" value="Ribosomal_bL27_CS"/>
</dbReference>
<dbReference type="NCBIfam" id="TIGR00062">
    <property type="entry name" value="L27"/>
    <property type="match status" value="1"/>
</dbReference>
<dbReference type="PANTHER" id="PTHR15893:SF0">
    <property type="entry name" value="LARGE RIBOSOMAL SUBUNIT PROTEIN BL27M"/>
    <property type="match status" value="1"/>
</dbReference>
<dbReference type="PANTHER" id="PTHR15893">
    <property type="entry name" value="RIBOSOMAL PROTEIN L27"/>
    <property type="match status" value="1"/>
</dbReference>
<dbReference type="Pfam" id="PF01016">
    <property type="entry name" value="Ribosomal_L27"/>
    <property type="match status" value="1"/>
</dbReference>
<dbReference type="PRINTS" id="PR00063">
    <property type="entry name" value="RIBOSOMALL27"/>
</dbReference>
<dbReference type="SUPFAM" id="SSF110324">
    <property type="entry name" value="Ribosomal L27 protein-like"/>
    <property type="match status" value="1"/>
</dbReference>
<dbReference type="PROSITE" id="PS00831">
    <property type="entry name" value="RIBOSOMAL_L27"/>
    <property type="match status" value="1"/>
</dbReference>
<reference key="1">
    <citation type="journal article" date="2001" name="Lancet">
        <title>Whole genome sequencing of meticillin-resistant Staphylococcus aureus.</title>
        <authorList>
            <person name="Kuroda M."/>
            <person name="Ohta T."/>
            <person name="Uchiyama I."/>
            <person name="Baba T."/>
            <person name="Yuzawa H."/>
            <person name="Kobayashi I."/>
            <person name="Cui L."/>
            <person name="Oguchi A."/>
            <person name="Aoki K."/>
            <person name="Nagai Y."/>
            <person name="Lian J.-Q."/>
            <person name="Ito T."/>
            <person name="Kanamori M."/>
            <person name="Matsumaru H."/>
            <person name="Maruyama A."/>
            <person name="Murakami H."/>
            <person name="Hosoyama A."/>
            <person name="Mizutani-Ui Y."/>
            <person name="Takahashi N.K."/>
            <person name="Sawano T."/>
            <person name="Inoue R."/>
            <person name="Kaito C."/>
            <person name="Sekimizu K."/>
            <person name="Hirakawa H."/>
            <person name="Kuhara S."/>
            <person name="Goto S."/>
            <person name="Yabuzaki J."/>
            <person name="Kanehisa M."/>
            <person name="Yamashita A."/>
            <person name="Oshima K."/>
            <person name="Furuya K."/>
            <person name="Yoshino C."/>
            <person name="Shiba T."/>
            <person name="Hattori M."/>
            <person name="Ogasawara N."/>
            <person name="Hayashi H."/>
            <person name="Hiramatsu K."/>
        </authorList>
    </citation>
    <scope>NUCLEOTIDE SEQUENCE [LARGE SCALE GENOMIC DNA]</scope>
    <source>
        <strain>Mu50 / ATCC 700699</strain>
    </source>
</reference>
<reference key="2">
    <citation type="journal article" date="2004" name="DNA Res.">
        <title>Nucleotide substitutions in Staphylococcus aureus strains, Mu50, Mu3, and N315.</title>
        <authorList>
            <person name="Ohta T."/>
            <person name="Hirakawa H."/>
            <person name="Morikawa K."/>
            <person name="Maruyama A."/>
            <person name="Inose Y."/>
            <person name="Yamashita A."/>
            <person name="Oshima K."/>
            <person name="Kuroda M."/>
            <person name="Hattori M."/>
            <person name="Hiramatsu K."/>
            <person name="Kuhara S."/>
            <person name="Hayashi H."/>
        </authorList>
    </citation>
    <scope>SEQUENCE REVISION</scope>
</reference>
<protein>
    <recommendedName>
        <fullName evidence="2">Large ribosomal subunit protein bL27</fullName>
    </recommendedName>
    <alternativeName>
        <fullName evidence="3">50S ribosomal protein L27</fullName>
    </alternativeName>
</protein>
<proteinExistence type="inferred from homology"/>
<evidence type="ECO:0000250" key="1">
    <source>
        <dbReference type="UniProtKB" id="Q2FXT0"/>
    </source>
</evidence>
<evidence type="ECO:0000255" key="2">
    <source>
        <dbReference type="HAMAP-Rule" id="MF_00539"/>
    </source>
</evidence>
<evidence type="ECO:0000305" key="3"/>
<organism>
    <name type="scientific">Staphylococcus aureus (strain Mu50 / ATCC 700699)</name>
    <dbReference type="NCBI Taxonomy" id="158878"/>
    <lineage>
        <taxon>Bacteria</taxon>
        <taxon>Bacillati</taxon>
        <taxon>Bacillota</taxon>
        <taxon>Bacilli</taxon>
        <taxon>Bacillales</taxon>
        <taxon>Staphylococcaceae</taxon>
        <taxon>Staphylococcus</taxon>
    </lineage>
</organism>
<feature type="propeptide" id="PRO_0000459934" evidence="1">
    <location>
        <begin position="1"/>
        <end position="9"/>
    </location>
</feature>
<feature type="chain" id="PRO_0000181165" description="Large ribosomal subunit protein bL27">
    <location>
        <begin position="10"/>
        <end position="94"/>
    </location>
</feature>